<feature type="chain" id="PRO_0000232523" description="KH domain-containing, RNA-binding, signal transduction-associated protein 3">
    <location>
        <begin position="1"/>
        <end position="346"/>
    </location>
</feature>
<feature type="domain" description="KH">
    <location>
        <begin position="61"/>
        <end position="127"/>
    </location>
</feature>
<feature type="region of interest" description="Involved in homodimerization" evidence="1">
    <location>
        <begin position="1"/>
        <end position="160"/>
    </location>
</feature>
<feature type="region of interest" description="Disordered" evidence="3">
    <location>
        <begin position="212"/>
        <end position="266"/>
    </location>
</feature>
<feature type="region of interest" description="Disordered" evidence="3">
    <location>
        <begin position="317"/>
        <end position="346"/>
    </location>
</feature>
<feature type="compositionally biased region" description="Pro residues" evidence="3">
    <location>
        <begin position="253"/>
        <end position="262"/>
    </location>
</feature>
<feature type="cross-link" description="Glycyl lysine isopeptide (Lys-Gly) (interchain with G-Cter in SUMO2)" evidence="1">
    <location>
        <position position="4"/>
    </location>
</feature>
<feature type="mutagenesis site" description="Abolishes splicing regulation." evidence="11">
    <original>V</original>
    <variation>F</variation>
    <location>
        <position position="129"/>
    </location>
</feature>
<feature type="mutagenesis site" description="Confers SIAH1-mediated degradation and strong SIAH1 binding." evidence="6">
    <original>AVG</original>
    <variation>GVV</variation>
    <location>
        <begin position="215"/>
        <end position="217"/>
    </location>
</feature>
<feature type="sequence conflict" description="In Ref. 1; AAC31753." evidence="14" ref="1">
    <original>N</original>
    <variation>Y</variation>
    <location>
        <position position="160"/>
    </location>
</feature>
<name>KHDR3_MOUSE</name>
<proteinExistence type="evidence at protein level"/>
<reference key="1">
    <citation type="journal article" date="1999" name="Hum. Mol. Genet.">
        <title>T-STAR/ETOILE: a novel relative of SAM68 that interacts with an RNA-binding protein implicated in spermatogenesis.</title>
        <authorList>
            <person name="Venables J.P."/>
            <person name="Vernet C."/>
            <person name="Chew S.L."/>
            <person name="Elliott D.J."/>
            <person name="Cowmeadow R.B."/>
            <person name="Wu J."/>
            <person name="Cooke H.J."/>
            <person name="Artzt K."/>
            <person name="Eperon I.C."/>
        </authorList>
    </citation>
    <scope>NUCLEOTIDE SEQUENCE [MRNA]</scope>
    <scope>TISSUE SPECIFICITY</scope>
    <scope>SUBCELLULAR LOCATION</scope>
</reference>
<reference key="2">
    <citation type="journal article" date="1999" name="Proc. Natl. Acad. Sci. U.S.A.">
        <title>Characterization of Sam68-like mammalian proteins SLM-1 and SLM-2: SLM-1 is a Src substrate during mitosis.</title>
        <authorList>
            <person name="Di Fruscio M."/>
            <person name="Chen T."/>
            <person name="Richard S."/>
        </authorList>
    </citation>
    <scope>NUCLEOTIDE SEQUENCE [MRNA]</scope>
    <scope>INTERACTION WITH KHDRBS1</scope>
    <source>
        <tissue>Brain</tissue>
    </source>
</reference>
<reference key="3">
    <citation type="journal article" date="2009" name="Biochemistry (Mosc.)">
        <title>Identification of messenger RNA substrates for mouse T-STAR.</title>
        <authorList>
            <person name="Zhang L.Y."/>
            <person name="Zeng M."/>
            <person name="Chen P."/>
            <person name="Sun H.Q."/>
            <person name="Tao D.C."/>
            <person name="Liu Y.Q."/>
            <person name="Lin L."/>
            <person name="Yang Y."/>
            <person name="Zhang S.Z."/>
            <person name="Ma Y.X."/>
        </authorList>
    </citation>
    <scope>FUNCTION</scope>
</reference>
<reference key="4">
    <citation type="journal article" date="2004" name="Hum. Mol. Genet.">
        <title>SIAH1 targets the alternative splicing factor T-STAR for degradation by the proteasome.</title>
        <authorList>
            <person name="Venables J.P."/>
            <person name="Dalgliesh C."/>
            <person name="Paronetto M.P."/>
            <person name="Skitt L."/>
            <person name="Thornton J.K."/>
            <person name="Saunders P.T."/>
            <person name="Sette C."/>
            <person name="Jones K.T."/>
            <person name="Elliott D.J."/>
        </authorList>
    </citation>
    <scope>MUTAGENESIS OF 215-ALA--GLY-217</scope>
</reference>
<reference key="5">
    <citation type="journal article" date="2004" name="J. Biol. Chem.">
        <title>The nuclear tyrosine kinase BRK/Sik phosphorylates and inhibits the RNA-binding activities of the Sam68-like mammalian proteins SLM-1 and SLM-2.</title>
        <authorList>
            <person name="Haegebarth A."/>
            <person name="Heap D."/>
            <person name="Bie W."/>
            <person name="Derry J.J."/>
            <person name="Richard S."/>
            <person name="Tyner A.L."/>
        </authorList>
    </citation>
    <scope>PHOSPHORYLATION BY PTK6</scope>
    <scope>FUNCTION</scope>
    <scope>SUBCELLULAR LOCATION</scope>
    <scope>TISSUE SPECIFICITY</scope>
</reference>
<reference key="6">
    <citation type="journal article" date="2009" name="BMC Mol. Biol.">
        <title>The STAR RNA binding proteins GLD-1, QKI, SAM68 and SLM-2 bind bipartite RNA motifs.</title>
        <authorList>
            <person name="Galarneau A."/>
            <person name="Richard S."/>
        </authorList>
    </citation>
    <scope>RNA-BINDING</scope>
</reference>
<reference key="7">
    <citation type="journal article" date="2011" name="Cell">
        <title>SAM68 regulates neuronal activity-dependent alternative splicing of neurexin-1.</title>
        <authorList>
            <person name="Iijima T."/>
            <person name="Wu K."/>
            <person name="Witte H."/>
            <person name="Hanno-Iijima Y."/>
            <person name="Glatter T."/>
            <person name="Richard S."/>
            <person name="Scheiffele P."/>
        </authorList>
    </citation>
    <scope>FUNCTION</scope>
    <scope>TISSUE SPECIFICITY</scope>
    <scope>DEVELOPMENTAL STAGE</scope>
</reference>
<reference key="8">
    <citation type="journal article" date="2013" name="PLoS Genet.">
        <title>The tissue-specific RNA binding protein T-STAR controls regional splicing patterns of neurexin pre-mRNAs in the brain.</title>
        <authorList>
            <person name="Ehrmann I."/>
            <person name="Dalgliesh C."/>
            <person name="Liu Y."/>
            <person name="Danilenko M."/>
            <person name="Crosier M."/>
            <person name="Overman L."/>
            <person name="Arthur H.M."/>
            <person name="Lindsay S."/>
            <person name="Clowry G.J."/>
            <person name="Venables J.P."/>
            <person name="Fort P."/>
            <person name="Elliott D.J."/>
        </authorList>
    </citation>
    <scope>FUNCTION</scope>
    <scope>TISSUE SPECIFICITY</scope>
    <scope>MUTAGENESIS OF VAL-129</scope>
</reference>
<reference key="9">
    <citation type="journal article" date="2014" name="J. Cell Biol.">
        <title>Neuronal cell type-specific alternative splicing is regulated by the KH domain protein SLM1.</title>
        <authorList>
            <person name="Iijima T."/>
            <person name="Iijima Y."/>
            <person name="Witte H."/>
            <person name="Scheiffele P."/>
        </authorList>
    </citation>
    <scope>FUNCTION</scope>
    <scope>TISSUE SPECIFICITY</scope>
</reference>
<reference key="10">
    <citation type="journal article" date="2014" name="J. Neurosci.">
        <title>Alternative splicing coupled nonsense-mediated decay generates neuronal cell type-specific expression of SLM proteins.</title>
        <authorList>
            <person name="Traunmueller L."/>
            <person name="Bornmann C."/>
            <person name="Scheiffele P."/>
        </authorList>
    </citation>
    <scope>FUNCTION</scope>
</reference>
<reference key="11">
    <citation type="journal article" date="2016" name="Science">
        <title>Control of neuronal synapse specification by a highly dedicated alternative splicing program.</title>
        <authorList>
            <person name="Traunmueller L."/>
            <person name="Gomez A.M."/>
            <person name="Nguyen T.M."/>
            <person name="Scheiffele P."/>
        </authorList>
    </citation>
    <scope>FUNCTION</scope>
</reference>
<organism>
    <name type="scientific">Mus musculus</name>
    <name type="common">Mouse</name>
    <dbReference type="NCBI Taxonomy" id="10090"/>
    <lineage>
        <taxon>Eukaryota</taxon>
        <taxon>Metazoa</taxon>
        <taxon>Chordata</taxon>
        <taxon>Craniata</taxon>
        <taxon>Vertebrata</taxon>
        <taxon>Euteleostomi</taxon>
        <taxon>Mammalia</taxon>
        <taxon>Eutheria</taxon>
        <taxon>Euarchontoglires</taxon>
        <taxon>Glires</taxon>
        <taxon>Rodentia</taxon>
        <taxon>Myomorpha</taxon>
        <taxon>Muroidea</taxon>
        <taxon>Muridae</taxon>
        <taxon>Murinae</taxon>
        <taxon>Mus</taxon>
        <taxon>Mus</taxon>
    </lineage>
</organism>
<gene>
    <name type="primary">Khdrbs3</name>
    <name type="synonym">Salp</name>
    <name type="synonym">Slm2</name>
</gene>
<evidence type="ECO:0000250" key="1">
    <source>
        <dbReference type="UniProtKB" id="O75525"/>
    </source>
</evidence>
<evidence type="ECO:0000250" key="2">
    <source>
        <dbReference type="UniProtKB" id="Q9JLP1"/>
    </source>
</evidence>
<evidence type="ECO:0000256" key="3">
    <source>
        <dbReference type="SAM" id="MobiDB-lite"/>
    </source>
</evidence>
<evidence type="ECO:0000269" key="4">
    <source>
    </source>
</evidence>
<evidence type="ECO:0000269" key="5">
    <source>
    </source>
</evidence>
<evidence type="ECO:0000269" key="6">
    <source>
    </source>
</evidence>
<evidence type="ECO:0000269" key="7">
    <source>
    </source>
</evidence>
<evidence type="ECO:0000269" key="8">
    <source>
    </source>
</evidence>
<evidence type="ECO:0000269" key="9">
    <source>
    </source>
</evidence>
<evidence type="ECO:0000269" key="10">
    <source>
    </source>
</evidence>
<evidence type="ECO:0000269" key="11">
    <source>
    </source>
</evidence>
<evidence type="ECO:0000269" key="12">
    <source>
    </source>
</evidence>
<evidence type="ECO:0000269" key="13">
    <source>
    </source>
</evidence>
<evidence type="ECO:0000305" key="14"/>
<accession>Q9R226</accession>
<accession>O88624</accession>
<dbReference type="EMBL" id="AF079763">
    <property type="protein sequence ID" value="AAC31753.1"/>
    <property type="molecule type" value="mRNA"/>
</dbReference>
<dbReference type="EMBL" id="AF099092">
    <property type="protein sequence ID" value="AAC72396.1"/>
    <property type="molecule type" value="mRNA"/>
</dbReference>
<dbReference type="EMBL" id="BC031507">
    <property type="protein sequence ID" value="AAH31507.1"/>
    <property type="molecule type" value="mRNA"/>
</dbReference>
<dbReference type="EMBL" id="BC057577">
    <property type="protein sequence ID" value="AAH57577.1"/>
    <property type="molecule type" value="mRNA"/>
</dbReference>
<dbReference type="CCDS" id="CCDS27513.1"/>
<dbReference type="RefSeq" id="NP_034288.2">
    <property type="nucleotide sequence ID" value="NM_010158.3"/>
</dbReference>
<dbReference type="SMR" id="Q9R226"/>
<dbReference type="BioGRID" id="199525">
    <property type="interactions" value="1"/>
</dbReference>
<dbReference type="FunCoup" id="Q9R226">
    <property type="interactions" value="1122"/>
</dbReference>
<dbReference type="IntAct" id="Q9R226">
    <property type="interactions" value="3"/>
</dbReference>
<dbReference type="MINT" id="Q9R226"/>
<dbReference type="STRING" id="10090.ENSMUSP00000022954"/>
<dbReference type="GlyGen" id="Q9R226">
    <property type="glycosylation" value="3 sites, 1 O-linked glycan (1 site)"/>
</dbReference>
<dbReference type="iPTMnet" id="Q9R226"/>
<dbReference type="PhosphoSitePlus" id="Q9R226"/>
<dbReference type="PaxDb" id="10090-ENSMUSP00000022954"/>
<dbReference type="PeptideAtlas" id="Q9R226"/>
<dbReference type="ProteomicsDB" id="269214"/>
<dbReference type="Antibodypedia" id="612">
    <property type="antibodies" value="197 antibodies from 28 providers"/>
</dbReference>
<dbReference type="DNASU" id="13992"/>
<dbReference type="Ensembl" id="ENSMUST00000022954.7">
    <property type="protein sequence ID" value="ENSMUSP00000022954.7"/>
    <property type="gene ID" value="ENSMUSG00000022332.9"/>
</dbReference>
<dbReference type="Ensembl" id="ENSMUST00000229234.2">
    <property type="protein sequence ID" value="ENSMUSP00000154887.2"/>
    <property type="gene ID" value="ENSMUSG00000022332.9"/>
</dbReference>
<dbReference type="Ensembl" id="ENSMUST00000229683.2">
    <property type="protein sequence ID" value="ENSMUSP00000155136.2"/>
    <property type="gene ID" value="ENSMUSG00000022332.9"/>
</dbReference>
<dbReference type="GeneID" id="13992"/>
<dbReference type="KEGG" id="mmu:13992"/>
<dbReference type="UCSC" id="uc007wbf.1">
    <property type="organism name" value="mouse"/>
</dbReference>
<dbReference type="AGR" id="MGI:1313312"/>
<dbReference type="CTD" id="10656"/>
<dbReference type="MGI" id="MGI:1313312">
    <property type="gene designation" value="Khdrbs3"/>
</dbReference>
<dbReference type="VEuPathDB" id="HostDB:ENSMUSG00000022332"/>
<dbReference type="eggNOG" id="KOG1588">
    <property type="taxonomic scope" value="Eukaryota"/>
</dbReference>
<dbReference type="GeneTree" id="ENSGT00940000157280"/>
<dbReference type="HOGENOM" id="CLU_034976_0_0_1"/>
<dbReference type="InParanoid" id="Q9R226"/>
<dbReference type="OMA" id="SYREQPY"/>
<dbReference type="OrthoDB" id="6777263at2759"/>
<dbReference type="PhylomeDB" id="Q9R226"/>
<dbReference type="TreeFam" id="TF314878"/>
<dbReference type="Reactome" id="R-MMU-8849468">
    <property type="pathway name" value="PTK6 Regulates Proteins Involved in RNA Processing"/>
</dbReference>
<dbReference type="BioGRID-ORCS" id="13992">
    <property type="hits" value="1 hit in 77 CRISPR screens"/>
</dbReference>
<dbReference type="ChiTaRS" id="Khdrbs3">
    <property type="organism name" value="mouse"/>
</dbReference>
<dbReference type="PRO" id="PR:Q9R226"/>
<dbReference type="Proteomes" id="UP000000589">
    <property type="component" value="Chromosome 15"/>
</dbReference>
<dbReference type="RNAct" id="Q9R226">
    <property type="molecule type" value="protein"/>
</dbReference>
<dbReference type="Bgee" id="ENSMUSG00000022332">
    <property type="expression patterns" value="Expressed in interventricular septum and 245 other cell types or tissues"/>
</dbReference>
<dbReference type="ExpressionAtlas" id="Q9R226">
    <property type="expression patterns" value="baseline and differential"/>
</dbReference>
<dbReference type="GO" id="GO:0005654">
    <property type="term" value="C:nucleoplasm"/>
    <property type="evidence" value="ECO:0000314"/>
    <property type="project" value="UniProtKB"/>
</dbReference>
<dbReference type="GO" id="GO:0032991">
    <property type="term" value="C:protein-containing complex"/>
    <property type="evidence" value="ECO:0007669"/>
    <property type="project" value="Ensembl"/>
</dbReference>
<dbReference type="GO" id="GO:0042802">
    <property type="term" value="F:identical protein binding"/>
    <property type="evidence" value="ECO:0007669"/>
    <property type="project" value="Ensembl"/>
</dbReference>
<dbReference type="GO" id="GO:0003723">
    <property type="term" value="F:RNA binding"/>
    <property type="evidence" value="ECO:0000250"/>
    <property type="project" value="UniProtKB"/>
</dbReference>
<dbReference type="GO" id="GO:0017124">
    <property type="term" value="F:SH3 domain binding"/>
    <property type="evidence" value="ECO:0007669"/>
    <property type="project" value="UniProtKB-KW"/>
</dbReference>
<dbReference type="GO" id="GO:0006397">
    <property type="term" value="P:mRNA processing"/>
    <property type="evidence" value="ECO:0007669"/>
    <property type="project" value="UniProtKB-KW"/>
</dbReference>
<dbReference type="GO" id="GO:0048024">
    <property type="term" value="P:regulation of mRNA splicing, via spliceosome"/>
    <property type="evidence" value="ECO:0000314"/>
    <property type="project" value="UniProtKB"/>
</dbReference>
<dbReference type="CDD" id="cd22470">
    <property type="entry name" value="KH-I_KHDRBS3"/>
    <property type="match status" value="1"/>
</dbReference>
<dbReference type="FunFam" id="3.30.1370.10:FF:000030">
    <property type="entry name" value="KH domain-containing, RNA-binding, signal transduction-associated protein 3 isoformX2"/>
    <property type="match status" value="1"/>
</dbReference>
<dbReference type="Gene3D" id="3.30.1370.10">
    <property type="entry name" value="K Homology domain, type 1"/>
    <property type="match status" value="1"/>
</dbReference>
<dbReference type="InterPro" id="IPR045071">
    <property type="entry name" value="BBP-like"/>
</dbReference>
<dbReference type="InterPro" id="IPR055256">
    <property type="entry name" value="KH_1_KHDC4/BBP-like"/>
</dbReference>
<dbReference type="InterPro" id="IPR004087">
    <property type="entry name" value="KH_dom"/>
</dbReference>
<dbReference type="InterPro" id="IPR036612">
    <property type="entry name" value="KH_dom_type_1_sf"/>
</dbReference>
<dbReference type="InterPro" id="IPR032571">
    <property type="entry name" value="Qua1_dom"/>
</dbReference>
<dbReference type="InterPro" id="IPR032335">
    <property type="entry name" value="Sam68-YY"/>
</dbReference>
<dbReference type="PANTHER" id="PTHR11208:SF29">
    <property type="entry name" value="KH DOMAIN-CONTAINING, RNA-BINDING, SIGNAL TRANSDUCTION-ASSOCIATED PROTEIN 3"/>
    <property type="match status" value="1"/>
</dbReference>
<dbReference type="PANTHER" id="PTHR11208">
    <property type="entry name" value="RNA-BINDING PROTEIN RELATED"/>
    <property type="match status" value="1"/>
</dbReference>
<dbReference type="Pfam" id="PF22675">
    <property type="entry name" value="KH-I_KHDC4-BBP"/>
    <property type="match status" value="1"/>
</dbReference>
<dbReference type="Pfam" id="PF16274">
    <property type="entry name" value="Qua1"/>
    <property type="match status" value="1"/>
</dbReference>
<dbReference type="Pfam" id="PF16568">
    <property type="entry name" value="Sam68-YY"/>
    <property type="match status" value="1"/>
</dbReference>
<dbReference type="SMART" id="SM00322">
    <property type="entry name" value="KH"/>
    <property type="match status" value="1"/>
</dbReference>
<dbReference type="SUPFAM" id="SSF54791">
    <property type="entry name" value="Eukaryotic type KH-domain (KH-domain type I)"/>
    <property type="match status" value="1"/>
</dbReference>
<keyword id="KW-1017">Isopeptide bond</keyword>
<keyword id="KW-0507">mRNA processing</keyword>
<keyword id="KW-0539">Nucleus</keyword>
<keyword id="KW-0597">Phosphoprotein</keyword>
<keyword id="KW-1185">Reference proteome</keyword>
<keyword id="KW-0694">RNA-binding</keyword>
<keyword id="KW-0729">SH3-binding</keyword>
<keyword id="KW-0804">Transcription</keyword>
<keyword id="KW-0805">Transcription regulation</keyword>
<keyword id="KW-0832">Ubl conjugation</keyword>
<comment type="function">
    <text evidence="1 2 7 8 9 10 11 12 13">RNA-binding protein that plays a role in the regulation of alternative splicing and influences mRNA splice site selection and exon inclusion. Binds preferentially to the 5'-[AU]UAAA-3' motif in vitro (PubMed:19457263). Binds optimally to RNA containing 5'-[AU]UAA-3' as a bipartite motif spaced by more than 15 nucleotides (By similarity). Binds poly(A). RNA-binding abilities are down-regulated by tyrosine kinase PTK6 (PubMed:15471878). Involved in splice site selection of vascular endothelial growth factor (By similarity). In vitro regulates CD44 alternative splicing by direct binding to purine-rich exonic enhancer (By similarity). Can regulate alternative splicing of neurexins NRXN1-3 in the laminin G-like domain 6 containing the evolutionary conserved neurexin alternative spliced segment 4 (AS4) involved in neurexin selective targeting to postsynaptic partners such as neuroligins and LRRTM family members. High concentrations in forebrain structures block splicing inclusion of NRXN1-3 AS4 exons while low concentrations favor their inclusion. Targeted, cell-type specific splicing regulation of NRXN1 at AS4 is involved in neuronal glutamatergic synapse function and plasticity and is linked to behavioral aspects (PubMed:22196734, PubMed:23637638, PubMed:24469635, PubMed:27174676). Regulates expression of KHDRBS2/SLIM-1 in defined neuron populations in the hippocampus by modifying its alternative splicing resulting in a transcript predicted to undergo nonsense-mediated decay (PubMed:25505328). Can bind FABP9 mRNA (PubMed:19916944). May play a role as a negative regulator of cell growth. Inhibits cell proliferation.</text>
</comment>
<comment type="subunit">
    <text evidence="1 2 4 14">Self-associates to form homooligomers; dimerization increases RNA affinity (By similarity). Interacts with KHDRBS2/SLM-1 (By similarity). Interacts with KHDRBS1/SAM68; heterooligomer formation of KHDRBS family proteins may modulate RNA substrate specificity (PubMed:10077576). Interacts with the splicing regulatory proteins SFRS9, SAFB and YTHDC1. Interacts with HNRPL, RBMX, p85 subunit of PI3-kinase, SERPINB5 (By similarity).</text>
</comment>
<comment type="subcellular location">
    <subcellularLocation>
        <location evidence="5 7">Nucleus</location>
    </subcellularLocation>
    <text>Localized in a compartment adjacent to the nucleolus, but distinct from the peri-nucleolar one.</text>
</comment>
<comment type="tissue specificity">
    <text evidence="5 7 11 12">Highly expressed in testis and brain. In adult cerebellum expressed predominantly in internal granular layer interneurons and in hippocampus is exclusively expressed in CA neurons; expression is restricted to neuronal subpopulations largely non-overlapping with expression of KHDRBS2/SLM-1.</text>
</comment>
<comment type="developmental stage">
    <text evidence="10">In the developing cerebellum expression is decreasing in the first 3 postnatal weeks.</text>
</comment>
<comment type="domain">
    <text evidence="1">The proline-rich site binds the SH3 domain of the p85 subunit of PI3-kinase.</text>
</comment>
<comment type="PTM">
    <text evidence="7">Phosphorylated on tyrosine residues by PTK6.</text>
</comment>
<comment type="similarity">
    <text evidence="14">Belongs to the KHDRBS family.</text>
</comment>
<protein>
    <recommendedName>
        <fullName>KH domain-containing, RNA-binding, signal transduction-associated protein 3</fullName>
    </recommendedName>
    <alternativeName>
        <fullName>RNA-binding protein Etoile</fullName>
    </alternativeName>
    <alternativeName>
        <fullName>Sam68-like mammalian protein 2</fullName>
        <shortName>SLM-2</shortName>
    </alternativeName>
</protein>
<sequence>MEEKYLPELMAEKDSLDPSFTHALRLVNREIEKFQKGEGKEEEKYIDVVINKNMKLGQKVLIPVKQFPKFNFVGKLLGPRGNSLKRLQEETLTKMSILGKGSMRDKAKEEELRKSGEAKYFHLNDDLHVLIEVFAPPAEAYARMGHALEEIKKFLIPDYNDEIRQAQLQELTYLNGGSENADVPVVRGKSTLRTRGVTTPAITRGRGGVTARPVAVGVPRGTPTPRGVLSTRGPVSRGRGLLTPRARGVPPTGYRPPPPPPTQETYGEYDYDDGYGTAYDEQSYDSYDNSYSTPAQSAADYYDYGHGLSEDAYDSYGQEEWTNSRHKAPSARTAKGVYRDQPYGRY</sequence>